<gene>
    <name evidence="1" type="primary">rplU</name>
    <name type="ordered locus">BAA_4694</name>
</gene>
<reference key="1">
    <citation type="submission" date="2009-04" db="EMBL/GenBank/DDBJ databases">
        <title>Genome sequence of Bacillus anthracis A0248.</title>
        <authorList>
            <person name="Dodson R.J."/>
            <person name="Munk A.C."/>
            <person name="Bruce D."/>
            <person name="Detter C."/>
            <person name="Tapia R."/>
            <person name="Sutton G."/>
            <person name="Sims D."/>
            <person name="Brettin T."/>
        </authorList>
    </citation>
    <scope>NUCLEOTIDE SEQUENCE [LARGE SCALE GENOMIC DNA]</scope>
    <source>
        <strain>A0248</strain>
    </source>
</reference>
<accession>C3P9D0</accession>
<proteinExistence type="inferred from homology"/>
<organism>
    <name type="scientific">Bacillus anthracis (strain A0248)</name>
    <dbReference type="NCBI Taxonomy" id="592021"/>
    <lineage>
        <taxon>Bacteria</taxon>
        <taxon>Bacillati</taxon>
        <taxon>Bacillota</taxon>
        <taxon>Bacilli</taxon>
        <taxon>Bacillales</taxon>
        <taxon>Bacillaceae</taxon>
        <taxon>Bacillus</taxon>
        <taxon>Bacillus cereus group</taxon>
    </lineage>
</organism>
<dbReference type="EMBL" id="CP001598">
    <property type="protein sequence ID" value="ACQ48346.1"/>
    <property type="molecule type" value="Genomic_DNA"/>
</dbReference>
<dbReference type="RefSeq" id="WP_000270907.1">
    <property type="nucleotide sequence ID" value="NC_012659.1"/>
</dbReference>
<dbReference type="SMR" id="C3P9D0"/>
<dbReference type="GeneID" id="93006656"/>
<dbReference type="KEGG" id="bai:BAA_4694"/>
<dbReference type="HOGENOM" id="CLU_061463_3_2_9"/>
<dbReference type="GO" id="GO:0005737">
    <property type="term" value="C:cytoplasm"/>
    <property type="evidence" value="ECO:0007669"/>
    <property type="project" value="UniProtKB-ARBA"/>
</dbReference>
<dbReference type="GO" id="GO:1990904">
    <property type="term" value="C:ribonucleoprotein complex"/>
    <property type="evidence" value="ECO:0007669"/>
    <property type="project" value="UniProtKB-KW"/>
</dbReference>
<dbReference type="GO" id="GO:0005840">
    <property type="term" value="C:ribosome"/>
    <property type="evidence" value="ECO:0007669"/>
    <property type="project" value="UniProtKB-KW"/>
</dbReference>
<dbReference type="GO" id="GO:0019843">
    <property type="term" value="F:rRNA binding"/>
    <property type="evidence" value="ECO:0007669"/>
    <property type="project" value="UniProtKB-UniRule"/>
</dbReference>
<dbReference type="GO" id="GO:0003735">
    <property type="term" value="F:structural constituent of ribosome"/>
    <property type="evidence" value="ECO:0007669"/>
    <property type="project" value="InterPro"/>
</dbReference>
<dbReference type="GO" id="GO:0006412">
    <property type="term" value="P:translation"/>
    <property type="evidence" value="ECO:0007669"/>
    <property type="project" value="UniProtKB-UniRule"/>
</dbReference>
<dbReference type="HAMAP" id="MF_01363">
    <property type="entry name" value="Ribosomal_bL21"/>
    <property type="match status" value="1"/>
</dbReference>
<dbReference type="InterPro" id="IPR028909">
    <property type="entry name" value="bL21-like"/>
</dbReference>
<dbReference type="InterPro" id="IPR036164">
    <property type="entry name" value="bL21-like_sf"/>
</dbReference>
<dbReference type="InterPro" id="IPR001787">
    <property type="entry name" value="Ribosomal_bL21"/>
</dbReference>
<dbReference type="InterPro" id="IPR018258">
    <property type="entry name" value="Ribosomal_bL21_CS"/>
</dbReference>
<dbReference type="NCBIfam" id="TIGR00061">
    <property type="entry name" value="L21"/>
    <property type="match status" value="1"/>
</dbReference>
<dbReference type="PANTHER" id="PTHR21349">
    <property type="entry name" value="50S RIBOSOMAL PROTEIN L21"/>
    <property type="match status" value="1"/>
</dbReference>
<dbReference type="PANTHER" id="PTHR21349:SF0">
    <property type="entry name" value="LARGE RIBOSOMAL SUBUNIT PROTEIN BL21M"/>
    <property type="match status" value="1"/>
</dbReference>
<dbReference type="Pfam" id="PF00829">
    <property type="entry name" value="Ribosomal_L21p"/>
    <property type="match status" value="1"/>
</dbReference>
<dbReference type="SUPFAM" id="SSF141091">
    <property type="entry name" value="L21p-like"/>
    <property type="match status" value="1"/>
</dbReference>
<dbReference type="PROSITE" id="PS01169">
    <property type="entry name" value="RIBOSOMAL_L21"/>
    <property type="match status" value="1"/>
</dbReference>
<evidence type="ECO:0000255" key="1">
    <source>
        <dbReference type="HAMAP-Rule" id="MF_01363"/>
    </source>
</evidence>
<evidence type="ECO:0000305" key="2"/>
<sequence>MYAIIETGGKQIKVEAGQAIYIEKLDVEAGETVTFDKVLFVGGENVKVGSPVVEGATVTAKVEKQGRAKKIIVFKYKAKKNNRKKQGHRQPYTKLVVEAINA</sequence>
<keyword id="KW-0687">Ribonucleoprotein</keyword>
<keyword id="KW-0689">Ribosomal protein</keyword>
<keyword id="KW-0694">RNA-binding</keyword>
<keyword id="KW-0699">rRNA-binding</keyword>
<feature type="chain" id="PRO_1000166699" description="Large ribosomal subunit protein bL21">
    <location>
        <begin position="1"/>
        <end position="102"/>
    </location>
</feature>
<name>RL21_BACAA</name>
<protein>
    <recommendedName>
        <fullName evidence="1">Large ribosomal subunit protein bL21</fullName>
    </recommendedName>
    <alternativeName>
        <fullName evidence="2">50S ribosomal protein L21</fullName>
    </alternativeName>
</protein>
<comment type="function">
    <text evidence="1">This protein binds to 23S rRNA in the presence of protein L20.</text>
</comment>
<comment type="subunit">
    <text evidence="1">Part of the 50S ribosomal subunit. Contacts protein L20.</text>
</comment>
<comment type="similarity">
    <text evidence="1">Belongs to the bacterial ribosomal protein bL21 family.</text>
</comment>